<feature type="chain" id="PRO_1000083006" description="Co-chaperone protein HscB">
    <location>
        <begin position="1"/>
        <end position="171"/>
    </location>
</feature>
<feature type="domain" description="J" evidence="1">
    <location>
        <begin position="2"/>
        <end position="74"/>
    </location>
</feature>
<name>HSCB_ECO24</name>
<accession>A7ZPX0</accession>
<gene>
    <name evidence="1" type="primary">hscB</name>
    <name type="ordered locus">EcE24377A_2811</name>
</gene>
<sequence length="171" mass="20108">MDYFTLFGLPARYQLDTQALSLRFQDLQRQYHPDKFASGSQAEQLAAVQQSATINQAWQTLRHPLMRAEYLLSLHGFDLASEQHTVRDTAFLMEQLELREELDEIEQAKDEARLESFIKRVKKMFDTRHQLMVEQLDNEAWDAAADTVRKLRFLDKLRSSAEQLEEKLLDF</sequence>
<proteinExistence type="inferred from homology"/>
<organism>
    <name type="scientific">Escherichia coli O139:H28 (strain E24377A / ETEC)</name>
    <dbReference type="NCBI Taxonomy" id="331111"/>
    <lineage>
        <taxon>Bacteria</taxon>
        <taxon>Pseudomonadati</taxon>
        <taxon>Pseudomonadota</taxon>
        <taxon>Gammaproteobacteria</taxon>
        <taxon>Enterobacterales</taxon>
        <taxon>Enterobacteriaceae</taxon>
        <taxon>Escherichia</taxon>
    </lineage>
</organism>
<evidence type="ECO:0000255" key="1">
    <source>
        <dbReference type="HAMAP-Rule" id="MF_00682"/>
    </source>
</evidence>
<protein>
    <recommendedName>
        <fullName evidence="1">Co-chaperone protein HscB</fullName>
    </recommendedName>
    <alternativeName>
        <fullName evidence="1">Hsc20</fullName>
    </alternativeName>
</protein>
<dbReference type="EMBL" id="CP000800">
    <property type="protein sequence ID" value="ABV19987.1"/>
    <property type="molecule type" value="Genomic_DNA"/>
</dbReference>
<dbReference type="RefSeq" id="WP_000384411.1">
    <property type="nucleotide sequence ID" value="NC_009801.1"/>
</dbReference>
<dbReference type="BMRB" id="A7ZPX0"/>
<dbReference type="SMR" id="A7ZPX0"/>
<dbReference type="GeneID" id="86947417"/>
<dbReference type="KEGG" id="ecw:EcE24377A_2811"/>
<dbReference type="HOGENOM" id="CLU_068529_2_0_6"/>
<dbReference type="Proteomes" id="UP000001122">
    <property type="component" value="Chromosome"/>
</dbReference>
<dbReference type="GO" id="GO:1990230">
    <property type="term" value="C:iron-sulfur cluster transfer complex"/>
    <property type="evidence" value="ECO:0007669"/>
    <property type="project" value="TreeGrafter"/>
</dbReference>
<dbReference type="GO" id="GO:0001671">
    <property type="term" value="F:ATPase activator activity"/>
    <property type="evidence" value="ECO:0007669"/>
    <property type="project" value="InterPro"/>
</dbReference>
<dbReference type="GO" id="GO:0051087">
    <property type="term" value="F:protein-folding chaperone binding"/>
    <property type="evidence" value="ECO:0007669"/>
    <property type="project" value="InterPro"/>
</dbReference>
<dbReference type="GO" id="GO:0044571">
    <property type="term" value="P:[2Fe-2S] cluster assembly"/>
    <property type="evidence" value="ECO:0007669"/>
    <property type="project" value="InterPro"/>
</dbReference>
<dbReference type="GO" id="GO:0051259">
    <property type="term" value="P:protein complex oligomerization"/>
    <property type="evidence" value="ECO:0007669"/>
    <property type="project" value="InterPro"/>
</dbReference>
<dbReference type="GO" id="GO:0006457">
    <property type="term" value="P:protein folding"/>
    <property type="evidence" value="ECO:0007669"/>
    <property type="project" value="UniProtKB-UniRule"/>
</dbReference>
<dbReference type="CDD" id="cd06257">
    <property type="entry name" value="DnaJ"/>
    <property type="match status" value="1"/>
</dbReference>
<dbReference type="FunFam" id="1.10.287.110:FF:000008">
    <property type="entry name" value="Co-chaperone protein HscB"/>
    <property type="match status" value="1"/>
</dbReference>
<dbReference type="FunFam" id="1.20.1280.20:FF:000001">
    <property type="entry name" value="Co-chaperone protein HscB"/>
    <property type="match status" value="1"/>
</dbReference>
<dbReference type="Gene3D" id="1.10.287.110">
    <property type="entry name" value="DnaJ domain"/>
    <property type="match status" value="1"/>
</dbReference>
<dbReference type="Gene3D" id="1.20.1280.20">
    <property type="entry name" value="HscB, C-terminal domain"/>
    <property type="match status" value="1"/>
</dbReference>
<dbReference type="HAMAP" id="MF_00682">
    <property type="entry name" value="HscB"/>
    <property type="match status" value="1"/>
</dbReference>
<dbReference type="InterPro" id="IPR001623">
    <property type="entry name" value="DnaJ_domain"/>
</dbReference>
<dbReference type="InterPro" id="IPR004640">
    <property type="entry name" value="HscB"/>
</dbReference>
<dbReference type="InterPro" id="IPR036386">
    <property type="entry name" value="HscB_C_sf"/>
</dbReference>
<dbReference type="InterPro" id="IPR009073">
    <property type="entry name" value="HscB_oligo_C"/>
</dbReference>
<dbReference type="InterPro" id="IPR036869">
    <property type="entry name" value="J_dom_sf"/>
</dbReference>
<dbReference type="NCBIfam" id="TIGR00714">
    <property type="entry name" value="hscB"/>
    <property type="match status" value="1"/>
</dbReference>
<dbReference type="NCBIfam" id="NF003449">
    <property type="entry name" value="PRK05014.1"/>
    <property type="match status" value="1"/>
</dbReference>
<dbReference type="PANTHER" id="PTHR14021">
    <property type="entry name" value="IRON-SULFUR CLUSTER CO-CHAPERONE PROTEIN HSCB"/>
    <property type="match status" value="1"/>
</dbReference>
<dbReference type="PANTHER" id="PTHR14021:SF15">
    <property type="entry name" value="IRON-SULFUR CLUSTER CO-CHAPERONE PROTEIN HSCB"/>
    <property type="match status" value="1"/>
</dbReference>
<dbReference type="Pfam" id="PF07743">
    <property type="entry name" value="HSCB_C"/>
    <property type="match status" value="1"/>
</dbReference>
<dbReference type="SMART" id="SM00271">
    <property type="entry name" value="DnaJ"/>
    <property type="match status" value="1"/>
</dbReference>
<dbReference type="SUPFAM" id="SSF46565">
    <property type="entry name" value="Chaperone J-domain"/>
    <property type="match status" value="1"/>
</dbReference>
<dbReference type="SUPFAM" id="SSF47144">
    <property type="entry name" value="HSC20 (HSCB), C-terminal oligomerisation domain"/>
    <property type="match status" value="1"/>
</dbReference>
<dbReference type="PROSITE" id="PS50076">
    <property type="entry name" value="DNAJ_2"/>
    <property type="match status" value="1"/>
</dbReference>
<reference key="1">
    <citation type="journal article" date="2008" name="J. Bacteriol.">
        <title>The pangenome structure of Escherichia coli: comparative genomic analysis of E. coli commensal and pathogenic isolates.</title>
        <authorList>
            <person name="Rasko D.A."/>
            <person name="Rosovitz M.J."/>
            <person name="Myers G.S.A."/>
            <person name="Mongodin E.F."/>
            <person name="Fricke W.F."/>
            <person name="Gajer P."/>
            <person name="Crabtree J."/>
            <person name="Sebaihia M."/>
            <person name="Thomson N.R."/>
            <person name="Chaudhuri R."/>
            <person name="Henderson I.R."/>
            <person name="Sperandio V."/>
            <person name="Ravel J."/>
        </authorList>
    </citation>
    <scope>NUCLEOTIDE SEQUENCE [LARGE SCALE GENOMIC DNA]</scope>
    <source>
        <strain>E24377A / ETEC</strain>
    </source>
</reference>
<keyword id="KW-0143">Chaperone</keyword>
<keyword id="KW-1185">Reference proteome</keyword>
<comment type="function">
    <text evidence="1">Co-chaperone involved in the maturation of iron-sulfur cluster-containing proteins. Seems to help targeting proteins to be folded toward HscA.</text>
</comment>
<comment type="subunit">
    <text evidence="1">Interacts with HscA and stimulates its ATPase activity. Interacts with IscU.</text>
</comment>
<comment type="similarity">
    <text evidence="1">Belongs to the HscB family.</text>
</comment>